<reference key="1">
    <citation type="journal article" date="2005" name="J. Bacteriol.">
        <title>Whole-genome sequence analysis of Pseudomonas syringae pv. phaseolicola 1448A reveals divergence among pathovars in genes involved in virulence and transposition.</title>
        <authorList>
            <person name="Joardar V."/>
            <person name="Lindeberg M."/>
            <person name="Jackson R.W."/>
            <person name="Selengut J."/>
            <person name="Dodson R."/>
            <person name="Brinkac L.M."/>
            <person name="Daugherty S.C."/>
            <person name="DeBoy R.T."/>
            <person name="Durkin A.S."/>
            <person name="Gwinn Giglio M."/>
            <person name="Madupu R."/>
            <person name="Nelson W.C."/>
            <person name="Rosovitz M.J."/>
            <person name="Sullivan S.A."/>
            <person name="Crabtree J."/>
            <person name="Creasy T."/>
            <person name="Davidsen T.M."/>
            <person name="Haft D.H."/>
            <person name="Zafar N."/>
            <person name="Zhou L."/>
            <person name="Halpin R."/>
            <person name="Holley T."/>
            <person name="Khouri H.M."/>
            <person name="Feldblyum T.V."/>
            <person name="White O."/>
            <person name="Fraser C.M."/>
            <person name="Chatterjee A.K."/>
            <person name="Cartinhour S."/>
            <person name="Schneider D."/>
            <person name="Mansfield J.W."/>
            <person name="Collmer A."/>
            <person name="Buell R."/>
        </authorList>
    </citation>
    <scope>NUCLEOTIDE SEQUENCE [LARGE SCALE GENOMIC DNA]</scope>
    <source>
        <strain>1448A / Race 6</strain>
    </source>
</reference>
<feature type="chain" id="PRO_1000189590" description="Probable 2-(5''-triphosphoribosyl)-3'-dephosphocoenzyme-A synthase">
    <location>
        <begin position="1"/>
        <end position="291"/>
    </location>
</feature>
<organism>
    <name type="scientific">Pseudomonas savastanoi pv. phaseolicola (strain 1448A / Race 6)</name>
    <name type="common">Pseudomonas syringae pv. phaseolicola (strain 1448A / Race 6)</name>
    <dbReference type="NCBI Taxonomy" id="264730"/>
    <lineage>
        <taxon>Bacteria</taxon>
        <taxon>Pseudomonadati</taxon>
        <taxon>Pseudomonadota</taxon>
        <taxon>Gammaproteobacteria</taxon>
        <taxon>Pseudomonadales</taxon>
        <taxon>Pseudomonadaceae</taxon>
        <taxon>Pseudomonas</taxon>
    </lineage>
</organism>
<protein>
    <recommendedName>
        <fullName evidence="1">Probable 2-(5''-triphosphoribosyl)-3'-dephosphocoenzyme-A synthase</fullName>
        <shortName evidence="1">2-(5''-triphosphoribosyl)-3'-dephospho-CoA synthase</shortName>
        <ecNumber evidence="1">2.4.2.52</ecNumber>
    </recommendedName>
</protein>
<keyword id="KW-0067">ATP-binding</keyword>
<keyword id="KW-0547">Nucleotide-binding</keyword>
<keyword id="KW-0808">Transferase</keyword>
<proteinExistence type="inferred from homology"/>
<evidence type="ECO:0000255" key="1">
    <source>
        <dbReference type="HAMAP-Rule" id="MF_01883"/>
    </source>
</evidence>
<sequence>MSALQLTPQAASLAERLADLAVDALIAEADLSPKPALVDRRGSGAHTDLHLGLMHSSALSLWPTFKLMADAAGQFNTVGQPLREALGRLGRDGEATMLRTTQGVNTHRGAIWALGLLVTAAALDARNCAPEAVLARAASLAQIKDRQVLVQGSHGNEVVRRYGVMGAREQAQQGFPAVRDFALPQLQRSRAAGSGEQNARLDALLAIMTTLSDTCVLHRAGIEGLHTMQRGAQHVLDVGGSASLAGRRALNQLDQQLLALNASPGGAADLLAACLFIDGLEPALGRVSRSV</sequence>
<comment type="function">
    <text evidence="1">Involved in the formation of 2-(5''-phosphoribosyl)-3'-dephosphocoenzyme-A, the prosthetic group of the acyl-carrier protein of the malonate decarboxylase.</text>
</comment>
<comment type="catalytic activity">
    <reaction evidence="1">
        <text>3'-dephospho-CoA + ATP = 2'-(5''-triphospho-alpha-D-ribosyl)-3'-dephospho-CoA + adenine</text>
        <dbReference type="Rhea" id="RHEA:15117"/>
        <dbReference type="ChEBI" id="CHEBI:16708"/>
        <dbReference type="ChEBI" id="CHEBI:30616"/>
        <dbReference type="ChEBI" id="CHEBI:57328"/>
        <dbReference type="ChEBI" id="CHEBI:61378"/>
        <dbReference type="EC" id="2.4.2.52"/>
    </reaction>
</comment>
<comment type="similarity">
    <text evidence="1">Belongs to the CitG/MdcB family.</text>
</comment>
<dbReference type="EC" id="2.4.2.52" evidence="1"/>
<dbReference type="EMBL" id="CP000058">
    <property type="protein sequence ID" value="AAZ35650.1"/>
    <property type="molecule type" value="Genomic_DNA"/>
</dbReference>
<dbReference type="RefSeq" id="WP_004666473.1">
    <property type="nucleotide sequence ID" value="NC_005773.3"/>
</dbReference>
<dbReference type="KEGG" id="psp:PSPPH_0434"/>
<dbReference type="eggNOG" id="COG1767">
    <property type="taxonomic scope" value="Bacteria"/>
</dbReference>
<dbReference type="HOGENOM" id="CLU_056179_0_0_6"/>
<dbReference type="Proteomes" id="UP000000551">
    <property type="component" value="Chromosome"/>
</dbReference>
<dbReference type="GO" id="GO:0005524">
    <property type="term" value="F:ATP binding"/>
    <property type="evidence" value="ECO:0007669"/>
    <property type="project" value="UniProtKB-KW"/>
</dbReference>
<dbReference type="GO" id="GO:0046917">
    <property type="term" value="F:triphosphoribosyl-dephospho-CoA synthase activity"/>
    <property type="evidence" value="ECO:0007669"/>
    <property type="project" value="UniProtKB-UniRule"/>
</dbReference>
<dbReference type="GO" id="GO:0051191">
    <property type="term" value="P:prosthetic group biosynthetic process"/>
    <property type="evidence" value="ECO:0007669"/>
    <property type="project" value="TreeGrafter"/>
</dbReference>
<dbReference type="Gene3D" id="1.10.4200.10">
    <property type="entry name" value="Triphosphoribosyl-dephospho-CoA protein"/>
    <property type="match status" value="2"/>
</dbReference>
<dbReference type="HAMAP" id="MF_01883">
    <property type="entry name" value="MdcB"/>
    <property type="match status" value="1"/>
</dbReference>
<dbReference type="InterPro" id="IPR002736">
    <property type="entry name" value="CitG"/>
</dbReference>
<dbReference type="InterPro" id="IPR017555">
    <property type="entry name" value="TriPribosyl-deP-CoA_syn"/>
</dbReference>
<dbReference type="NCBIfam" id="TIGR03132">
    <property type="entry name" value="malonate_mdcB"/>
    <property type="match status" value="1"/>
</dbReference>
<dbReference type="NCBIfam" id="NF002315">
    <property type="entry name" value="PRK01237.1"/>
    <property type="match status" value="1"/>
</dbReference>
<dbReference type="PANTHER" id="PTHR30201:SF2">
    <property type="entry name" value="2-(5''-TRIPHOSPHORIBOSYL)-3'-DEPHOSPHOCOENZYME-A SYNTHASE"/>
    <property type="match status" value="1"/>
</dbReference>
<dbReference type="PANTHER" id="PTHR30201">
    <property type="entry name" value="TRIPHOSPHORIBOSYL-DEPHOSPHO-COA SYNTHASE"/>
    <property type="match status" value="1"/>
</dbReference>
<dbReference type="Pfam" id="PF01874">
    <property type="entry name" value="CitG"/>
    <property type="match status" value="1"/>
</dbReference>
<name>MDCB_PSE14</name>
<gene>
    <name evidence="1" type="primary">mdcB</name>
    <name type="ordered locus">PSPPH_0434</name>
</gene>
<accession>Q48PD2</accession>